<gene>
    <name type="ordered locus">Mevan_0378</name>
</gene>
<reference key="1">
    <citation type="submission" date="2007-06" db="EMBL/GenBank/DDBJ databases">
        <title>Complete sequence of Methanococcus vannielii SB.</title>
        <authorList>
            <consortium name="US DOE Joint Genome Institute"/>
            <person name="Copeland A."/>
            <person name="Lucas S."/>
            <person name="Lapidus A."/>
            <person name="Barry K."/>
            <person name="Glavina del Rio T."/>
            <person name="Dalin E."/>
            <person name="Tice H."/>
            <person name="Pitluck S."/>
            <person name="Chain P."/>
            <person name="Malfatti S."/>
            <person name="Shin M."/>
            <person name="Vergez L."/>
            <person name="Schmutz J."/>
            <person name="Larimer F."/>
            <person name="Land M."/>
            <person name="Hauser L."/>
            <person name="Kyrpides N."/>
            <person name="Anderson I."/>
            <person name="Sieprawska-Lupa M."/>
            <person name="Whitman W.B."/>
            <person name="Richardson P."/>
        </authorList>
    </citation>
    <scope>NUCLEOTIDE SEQUENCE [LARGE SCALE GENOMIC DNA]</scope>
    <source>
        <strain>ATCC 35089 / DSM 1224 / JCM 13029 / OCM 148 / SB</strain>
    </source>
</reference>
<name>Y378_METVS</name>
<evidence type="ECO:0000255" key="1">
    <source>
        <dbReference type="HAMAP-Rule" id="MF_00634"/>
    </source>
</evidence>
<accession>A6UP65</accession>
<comment type="similarity">
    <text evidence="1">Belongs to the UPF0235 family.</text>
</comment>
<dbReference type="EMBL" id="CP000742">
    <property type="protein sequence ID" value="ABR54287.1"/>
    <property type="molecule type" value="Genomic_DNA"/>
</dbReference>
<dbReference type="RefSeq" id="WP_011972190.1">
    <property type="nucleotide sequence ID" value="NC_009634.1"/>
</dbReference>
<dbReference type="SMR" id="A6UP65"/>
<dbReference type="STRING" id="406327.Mevan_0378"/>
<dbReference type="GeneID" id="5325739"/>
<dbReference type="KEGG" id="mvn:Mevan_0378"/>
<dbReference type="eggNOG" id="arCOG04058">
    <property type="taxonomic scope" value="Archaea"/>
</dbReference>
<dbReference type="HOGENOM" id="CLU_130694_6_1_2"/>
<dbReference type="OrthoDB" id="53248at2157"/>
<dbReference type="Proteomes" id="UP000001107">
    <property type="component" value="Chromosome"/>
</dbReference>
<dbReference type="GO" id="GO:0005737">
    <property type="term" value="C:cytoplasm"/>
    <property type="evidence" value="ECO:0007669"/>
    <property type="project" value="TreeGrafter"/>
</dbReference>
<dbReference type="Gene3D" id="3.30.1200.10">
    <property type="entry name" value="YggU-like"/>
    <property type="match status" value="1"/>
</dbReference>
<dbReference type="HAMAP" id="MF_00634">
    <property type="entry name" value="UPF0235"/>
    <property type="match status" value="1"/>
</dbReference>
<dbReference type="InterPro" id="IPR003746">
    <property type="entry name" value="DUF167"/>
</dbReference>
<dbReference type="InterPro" id="IPR036591">
    <property type="entry name" value="YggU-like_sf"/>
</dbReference>
<dbReference type="NCBIfam" id="TIGR00251">
    <property type="entry name" value="DUF167 family protein"/>
    <property type="match status" value="1"/>
</dbReference>
<dbReference type="PANTHER" id="PTHR13420">
    <property type="entry name" value="UPF0235 PROTEIN C15ORF40"/>
    <property type="match status" value="1"/>
</dbReference>
<dbReference type="PANTHER" id="PTHR13420:SF7">
    <property type="entry name" value="UPF0235 PROTEIN C15ORF40"/>
    <property type="match status" value="1"/>
</dbReference>
<dbReference type="Pfam" id="PF02594">
    <property type="entry name" value="DUF167"/>
    <property type="match status" value="1"/>
</dbReference>
<dbReference type="SMART" id="SM01152">
    <property type="entry name" value="DUF167"/>
    <property type="match status" value="1"/>
</dbReference>
<dbReference type="SUPFAM" id="SSF69786">
    <property type="entry name" value="YggU-like"/>
    <property type="match status" value="1"/>
</dbReference>
<organism>
    <name type="scientific">Methanococcus vannielii (strain ATCC 35089 / DSM 1224 / JCM 13029 / OCM 148 / SB)</name>
    <dbReference type="NCBI Taxonomy" id="406327"/>
    <lineage>
        <taxon>Archaea</taxon>
        <taxon>Methanobacteriati</taxon>
        <taxon>Methanobacteriota</taxon>
        <taxon>Methanomada group</taxon>
        <taxon>Methanococci</taxon>
        <taxon>Methanococcales</taxon>
        <taxon>Methanococcaceae</taxon>
        <taxon>Methanococcus</taxon>
    </lineage>
</organism>
<sequence length="101" mass="11678">MIEEIIKKTEKGVLIDIEVTTNAKKNEIGKINKWRKRLEVKIKEQPIEGRANKAILKFLKEIFKTDVELNPVTTSPQKTVLISCDTKEYVVNILKREIKSV</sequence>
<proteinExistence type="inferred from homology"/>
<feature type="chain" id="PRO_1000056773" description="UPF0235 protein Mevan_0378">
    <location>
        <begin position="1"/>
        <end position="101"/>
    </location>
</feature>
<protein>
    <recommendedName>
        <fullName evidence="1">UPF0235 protein Mevan_0378</fullName>
    </recommendedName>
</protein>